<gene>
    <name evidence="1" type="primary">nuoD</name>
    <name type="ordered locus">Hhal_1762</name>
</gene>
<comment type="function">
    <text evidence="1">NDH-1 shuttles electrons from NADH, via FMN and iron-sulfur (Fe-S) centers, to quinones in the respiratory chain. The immediate electron acceptor for the enzyme in this species is believed to be ubiquinone. Couples the redox reaction to proton translocation (for every two electrons transferred, four hydrogen ions are translocated across the cytoplasmic membrane), and thus conserves the redox energy in a proton gradient.</text>
</comment>
<comment type="catalytic activity">
    <reaction evidence="1">
        <text>a quinone + NADH + 5 H(+)(in) = a quinol + NAD(+) + 4 H(+)(out)</text>
        <dbReference type="Rhea" id="RHEA:57888"/>
        <dbReference type="ChEBI" id="CHEBI:15378"/>
        <dbReference type="ChEBI" id="CHEBI:24646"/>
        <dbReference type="ChEBI" id="CHEBI:57540"/>
        <dbReference type="ChEBI" id="CHEBI:57945"/>
        <dbReference type="ChEBI" id="CHEBI:132124"/>
    </reaction>
</comment>
<comment type="subunit">
    <text evidence="1">NDH-1 is composed of 14 different subunits. Subunits NuoB, C, D, E, F, and G constitute the peripheral sector of the complex.</text>
</comment>
<comment type="subcellular location">
    <subcellularLocation>
        <location evidence="1">Cell inner membrane</location>
        <topology evidence="1">Peripheral membrane protein</topology>
        <orientation evidence="1">Cytoplasmic side</orientation>
    </subcellularLocation>
</comment>
<comment type="similarity">
    <text evidence="1">Belongs to the complex I 49 kDa subunit family.</text>
</comment>
<name>NUOD_HALHL</name>
<sequence>MAEFQSYTLNFGPQHPAAHGVLRLVLEMEGEAVRRADPHIGLLHRATEKLAESKPYNQSIGYMDRLDYVSMMCNEHGYVRAIEKLLGIEPPLRAQYIRTMMDEVTRILNHLMWLGGHGLDVGAMTAFLYTFREREDLMDVYEAVSGARMHATYYRPGGVHRDLPDQMPKYEPSAYRSDKELREMNRAREGSVLDFLDDFCERFPACVDEYETLLTENRIWKQRLVDICPVSAERAVELGFTGPLLRGSGVAWDLRKKQPYAAYDRVDFDIPVGVNGDSYDRYLVRVEEMRQSVRIIKQCVDWLRANPGPVRIDDPKVTPPTREEMKDDMESLIHHFKLFTEGYCTPPGEVYAAVEAPKGEFGVYLISDGANKPYRLKVRPPCYYHLAATDEMIRGYMLADVVTLIGSLDVVFGEVDR</sequence>
<protein>
    <recommendedName>
        <fullName evidence="1">NADH-quinone oxidoreductase subunit D</fullName>
        <ecNumber evidence="1">7.1.1.-</ecNumber>
    </recommendedName>
    <alternativeName>
        <fullName evidence="1">NADH dehydrogenase I subunit D</fullName>
    </alternativeName>
    <alternativeName>
        <fullName evidence="1">NDH-1 subunit D</fullName>
    </alternativeName>
</protein>
<evidence type="ECO:0000255" key="1">
    <source>
        <dbReference type="HAMAP-Rule" id="MF_01358"/>
    </source>
</evidence>
<organism>
    <name type="scientific">Halorhodospira halophila (strain DSM 244 / SL1)</name>
    <name type="common">Ectothiorhodospira halophila (strain DSM 244 / SL1)</name>
    <dbReference type="NCBI Taxonomy" id="349124"/>
    <lineage>
        <taxon>Bacteria</taxon>
        <taxon>Pseudomonadati</taxon>
        <taxon>Pseudomonadota</taxon>
        <taxon>Gammaproteobacteria</taxon>
        <taxon>Chromatiales</taxon>
        <taxon>Ectothiorhodospiraceae</taxon>
        <taxon>Halorhodospira</taxon>
    </lineage>
</organism>
<dbReference type="EC" id="7.1.1.-" evidence="1"/>
<dbReference type="EMBL" id="CP000544">
    <property type="protein sequence ID" value="ABM62526.1"/>
    <property type="molecule type" value="Genomic_DNA"/>
</dbReference>
<dbReference type="RefSeq" id="WP_011814548.1">
    <property type="nucleotide sequence ID" value="NC_008789.1"/>
</dbReference>
<dbReference type="SMR" id="A1WXW4"/>
<dbReference type="STRING" id="349124.Hhal_1762"/>
<dbReference type="KEGG" id="hha:Hhal_1762"/>
<dbReference type="eggNOG" id="COG0649">
    <property type="taxonomic scope" value="Bacteria"/>
</dbReference>
<dbReference type="HOGENOM" id="CLU_015134_1_1_6"/>
<dbReference type="Proteomes" id="UP000000647">
    <property type="component" value="Chromosome"/>
</dbReference>
<dbReference type="GO" id="GO:0005886">
    <property type="term" value="C:plasma membrane"/>
    <property type="evidence" value="ECO:0007669"/>
    <property type="project" value="UniProtKB-SubCell"/>
</dbReference>
<dbReference type="GO" id="GO:0051287">
    <property type="term" value="F:NAD binding"/>
    <property type="evidence" value="ECO:0007669"/>
    <property type="project" value="InterPro"/>
</dbReference>
<dbReference type="GO" id="GO:0050136">
    <property type="term" value="F:NADH:ubiquinone reductase (non-electrogenic) activity"/>
    <property type="evidence" value="ECO:0007669"/>
    <property type="project" value="UniProtKB-UniRule"/>
</dbReference>
<dbReference type="GO" id="GO:0048038">
    <property type="term" value="F:quinone binding"/>
    <property type="evidence" value="ECO:0007669"/>
    <property type="project" value="UniProtKB-KW"/>
</dbReference>
<dbReference type="FunFam" id="1.10.645.10:FF:000005">
    <property type="entry name" value="NADH-quinone oxidoreductase subunit D"/>
    <property type="match status" value="1"/>
</dbReference>
<dbReference type="Gene3D" id="1.10.645.10">
    <property type="entry name" value="Cytochrome-c3 Hydrogenase, chain B"/>
    <property type="match status" value="1"/>
</dbReference>
<dbReference type="HAMAP" id="MF_01358">
    <property type="entry name" value="NDH1_NuoD"/>
    <property type="match status" value="1"/>
</dbReference>
<dbReference type="InterPro" id="IPR001135">
    <property type="entry name" value="NADH_Q_OxRdtase_suD"/>
</dbReference>
<dbReference type="InterPro" id="IPR014029">
    <property type="entry name" value="NADH_UbQ_OxRdtase_49kDa_CS"/>
</dbReference>
<dbReference type="InterPro" id="IPR022885">
    <property type="entry name" value="NDH1_su_D/H"/>
</dbReference>
<dbReference type="InterPro" id="IPR029014">
    <property type="entry name" value="NiFe-Hase_large"/>
</dbReference>
<dbReference type="NCBIfam" id="TIGR01962">
    <property type="entry name" value="NuoD"/>
    <property type="match status" value="1"/>
</dbReference>
<dbReference type="NCBIfam" id="NF004739">
    <property type="entry name" value="PRK06075.1"/>
    <property type="match status" value="1"/>
</dbReference>
<dbReference type="PANTHER" id="PTHR11993:SF10">
    <property type="entry name" value="NADH DEHYDROGENASE [UBIQUINONE] IRON-SULFUR PROTEIN 2, MITOCHONDRIAL"/>
    <property type="match status" value="1"/>
</dbReference>
<dbReference type="PANTHER" id="PTHR11993">
    <property type="entry name" value="NADH-UBIQUINONE OXIDOREDUCTASE 49 KDA SUBUNIT"/>
    <property type="match status" value="1"/>
</dbReference>
<dbReference type="Pfam" id="PF00346">
    <property type="entry name" value="Complex1_49kDa"/>
    <property type="match status" value="1"/>
</dbReference>
<dbReference type="SUPFAM" id="SSF56762">
    <property type="entry name" value="HydB/Nqo4-like"/>
    <property type="match status" value="1"/>
</dbReference>
<dbReference type="PROSITE" id="PS00535">
    <property type="entry name" value="COMPLEX1_49K"/>
    <property type="match status" value="1"/>
</dbReference>
<keyword id="KW-0997">Cell inner membrane</keyword>
<keyword id="KW-1003">Cell membrane</keyword>
<keyword id="KW-0472">Membrane</keyword>
<keyword id="KW-0520">NAD</keyword>
<keyword id="KW-0874">Quinone</keyword>
<keyword id="KW-1185">Reference proteome</keyword>
<keyword id="KW-1278">Translocase</keyword>
<keyword id="KW-0813">Transport</keyword>
<keyword id="KW-0830">Ubiquinone</keyword>
<feature type="chain" id="PRO_0000371874" description="NADH-quinone oxidoreductase subunit D">
    <location>
        <begin position="1"/>
        <end position="417"/>
    </location>
</feature>
<proteinExistence type="inferred from homology"/>
<accession>A1WXW4</accession>
<reference key="1">
    <citation type="submission" date="2006-12" db="EMBL/GenBank/DDBJ databases">
        <title>Complete sequence of Halorhodospira halophila SL1.</title>
        <authorList>
            <consortium name="US DOE Joint Genome Institute"/>
            <person name="Copeland A."/>
            <person name="Lucas S."/>
            <person name="Lapidus A."/>
            <person name="Barry K."/>
            <person name="Detter J.C."/>
            <person name="Glavina del Rio T."/>
            <person name="Hammon N."/>
            <person name="Israni S."/>
            <person name="Dalin E."/>
            <person name="Tice H."/>
            <person name="Pitluck S."/>
            <person name="Saunders E."/>
            <person name="Brettin T."/>
            <person name="Bruce D."/>
            <person name="Han C."/>
            <person name="Tapia R."/>
            <person name="Schmutz J."/>
            <person name="Larimer F."/>
            <person name="Land M."/>
            <person name="Hauser L."/>
            <person name="Kyrpides N."/>
            <person name="Mikhailova N."/>
            <person name="Hoff W."/>
            <person name="Richardson P."/>
        </authorList>
    </citation>
    <scope>NUCLEOTIDE SEQUENCE [LARGE SCALE GENOMIC DNA]</scope>
    <source>
        <strain>DSM 244 / SL1</strain>
    </source>
</reference>